<evidence type="ECO:0000250" key="1">
    <source>
        <dbReference type="UniProtKB" id="Q8VYJ2"/>
    </source>
</evidence>
<evidence type="ECO:0000255" key="2">
    <source>
        <dbReference type="PROSITE-ProRule" id="PRU01078"/>
    </source>
</evidence>
<evidence type="ECO:0000256" key="3">
    <source>
        <dbReference type="SAM" id="MobiDB-lite"/>
    </source>
</evidence>
<evidence type="ECO:0000269" key="4">
    <source>
    </source>
</evidence>
<evidence type="ECO:0000303" key="5">
    <source>
    </source>
</evidence>
<evidence type="ECO:0000305" key="6"/>
<evidence type="ECO:0000312" key="7">
    <source>
        <dbReference type="Araport" id="AT4G12050"/>
    </source>
</evidence>
<evidence type="ECO:0000312" key="8">
    <source>
        <dbReference type="EMBL" id="CAB40946.1"/>
    </source>
</evidence>
<evidence type="ECO:0000312" key="9">
    <source>
        <dbReference type="EMBL" id="FAA00297.1"/>
    </source>
</evidence>
<protein>
    <recommendedName>
        <fullName evidence="9">AT-hook motif nuclear-localized protein 26</fullName>
    </recommendedName>
</protein>
<organism>
    <name type="scientific">Arabidopsis thaliana</name>
    <name type="common">Mouse-ear cress</name>
    <dbReference type="NCBI Taxonomy" id="3702"/>
    <lineage>
        <taxon>Eukaryota</taxon>
        <taxon>Viridiplantae</taxon>
        <taxon>Streptophyta</taxon>
        <taxon>Embryophyta</taxon>
        <taxon>Tracheophyta</taxon>
        <taxon>Spermatophyta</taxon>
        <taxon>Magnoliopsida</taxon>
        <taxon>eudicotyledons</taxon>
        <taxon>Gunneridae</taxon>
        <taxon>Pentapetalae</taxon>
        <taxon>rosids</taxon>
        <taxon>malvids</taxon>
        <taxon>Brassicales</taxon>
        <taxon>Brassicaceae</taxon>
        <taxon>Camelineae</taxon>
        <taxon>Arabidopsis</taxon>
    </lineage>
</organism>
<proteinExistence type="evidence at transcript level"/>
<accession>Q9SZ70</accession>
<feature type="chain" id="PRO_0000432044" description="AT-hook motif nuclear-localized protein 26">
    <location>
        <begin position="1"/>
        <end position="339"/>
    </location>
</feature>
<feature type="domain" description="PPC" evidence="2">
    <location>
        <begin position="142"/>
        <end position="279"/>
    </location>
</feature>
<feature type="DNA-binding region" description="A.T hook" evidence="6">
    <location>
        <begin position="118"/>
        <end position="130"/>
    </location>
</feature>
<feature type="region of interest" description="Disordered" evidence="3">
    <location>
        <begin position="1"/>
        <end position="132"/>
    </location>
</feature>
<feature type="region of interest" description="Disordered" evidence="3">
    <location>
        <begin position="273"/>
        <end position="339"/>
    </location>
</feature>
<feature type="compositionally biased region" description="Polar residues" evidence="3">
    <location>
        <begin position="1"/>
        <end position="12"/>
    </location>
</feature>
<feature type="compositionally biased region" description="Low complexity" evidence="3">
    <location>
        <begin position="24"/>
        <end position="45"/>
    </location>
</feature>
<feature type="compositionally biased region" description="Polar residues" evidence="3">
    <location>
        <begin position="82"/>
        <end position="93"/>
    </location>
</feature>
<feature type="compositionally biased region" description="Gly residues" evidence="3">
    <location>
        <begin position="102"/>
        <end position="113"/>
    </location>
</feature>
<feature type="compositionally biased region" description="Gly residues" evidence="3">
    <location>
        <begin position="278"/>
        <end position="291"/>
    </location>
</feature>
<feature type="compositionally biased region" description="Low complexity" evidence="3">
    <location>
        <begin position="292"/>
        <end position="310"/>
    </location>
</feature>
<gene>
    <name evidence="5" type="primary">AHL26</name>
    <name evidence="7" type="ordered locus">At4g12050</name>
    <name evidence="8" type="ORF">F16J13.120</name>
</gene>
<dbReference type="EMBL" id="AL049638">
    <property type="protein sequence ID" value="CAB40946.1"/>
    <property type="molecule type" value="Genomic_DNA"/>
</dbReference>
<dbReference type="EMBL" id="AL161533">
    <property type="protein sequence ID" value="CAB78248.1"/>
    <property type="molecule type" value="Genomic_DNA"/>
</dbReference>
<dbReference type="EMBL" id="CP002687">
    <property type="protein sequence ID" value="AEE83091.1"/>
    <property type="molecule type" value="Genomic_DNA"/>
</dbReference>
<dbReference type="EMBL" id="BT009731">
    <property type="protein sequence ID" value="AAP88365.1"/>
    <property type="molecule type" value="mRNA"/>
</dbReference>
<dbReference type="EMBL" id="AK228172">
    <property type="protein sequence ID" value="BAF00128.1"/>
    <property type="molecule type" value="mRNA"/>
</dbReference>
<dbReference type="EMBL" id="AB493679">
    <property type="protein sequence ID" value="BAH30517.1"/>
    <property type="molecule type" value="mRNA"/>
</dbReference>
<dbReference type="EMBL" id="BR000362">
    <property type="protein sequence ID" value="FAA00297.1"/>
    <property type="molecule type" value="mRNA"/>
</dbReference>
<dbReference type="PIR" id="T06612">
    <property type="entry name" value="T06612"/>
</dbReference>
<dbReference type="RefSeq" id="NP_192942.1">
    <property type="nucleotide sequence ID" value="NM_117275.4"/>
</dbReference>
<dbReference type="SMR" id="Q9SZ70"/>
<dbReference type="STRING" id="3702.Q9SZ70"/>
<dbReference type="iPTMnet" id="Q9SZ70"/>
<dbReference type="PaxDb" id="3702-AT4G12050.1"/>
<dbReference type="ProteomicsDB" id="244670"/>
<dbReference type="DNASU" id="826813"/>
<dbReference type="EnsemblPlants" id="AT4G12050.1">
    <property type="protein sequence ID" value="AT4G12050.1"/>
    <property type="gene ID" value="AT4G12050"/>
</dbReference>
<dbReference type="GeneID" id="826813"/>
<dbReference type="Gramene" id="AT4G12050.1">
    <property type="protein sequence ID" value="AT4G12050.1"/>
    <property type="gene ID" value="AT4G12050"/>
</dbReference>
<dbReference type="KEGG" id="ath:AT4G12050"/>
<dbReference type="Araport" id="AT4G12050"/>
<dbReference type="TAIR" id="AT4G12050">
    <property type="gene designation" value="AHL26"/>
</dbReference>
<dbReference type="eggNOG" id="ENOG502QRBV">
    <property type="taxonomic scope" value="Eukaryota"/>
</dbReference>
<dbReference type="HOGENOM" id="CLU_039808_2_1_1"/>
<dbReference type="InParanoid" id="Q9SZ70"/>
<dbReference type="OMA" id="QQFFLHH"/>
<dbReference type="OrthoDB" id="780035at2759"/>
<dbReference type="PhylomeDB" id="Q9SZ70"/>
<dbReference type="PRO" id="PR:Q9SZ70"/>
<dbReference type="Proteomes" id="UP000006548">
    <property type="component" value="Chromosome 4"/>
</dbReference>
<dbReference type="ExpressionAtlas" id="Q9SZ70">
    <property type="expression patterns" value="baseline and differential"/>
</dbReference>
<dbReference type="GO" id="GO:0005634">
    <property type="term" value="C:nucleus"/>
    <property type="evidence" value="ECO:0007669"/>
    <property type="project" value="UniProtKB-SubCell"/>
</dbReference>
<dbReference type="GO" id="GO:0003680">
    <property type="term" value="F:minor groove of adenine-thymine-rich DNA binding"/>
    <property type="evidence" value="ECO:0007669"/>
    <property type="project" value="InterPro"/>
</dbReference>
<dbReference type="CDD" id="cd11378">
    <property type="entry name" value="DUF296"/>
    <property type="match status" value="1"/>
</dbReference>
<dbReference type="FunFam" id="3.30.1330.80:FF:000001">
    <property type="entry name" value="AT-hook motif nuclear-localized protein"/>
    <property type="match status" value="1"/>
</dbReference>
<dbReference type="Gene3D" id="3.30.1330.80">
    <property type="entry name" value="Hypothetical protein, similar to alpha- acetolactate decarboxylase, domain 2"/>
    <property type="match status" value="1"/>
</dbReference>
<dbReference type="InterPro" id="IPR014476">
    <property type="entry name" value="AHL15-29"/>
</dbReference>
<dbReference type="InterPro" id="IPR005175">
    <property type="entry name" value="PPC_dom"/>
</dbReference>
<dbReference type="PANTHER" id="PTHR31100">
    <property type="entry name" value="AT-HOOK MOTIF NUCLEAR-LOCALIZED PROTEIN 15"/>
    <property type="match status" value="1"/>
</dbReference>
<dbReference type="PANTHER" id="PTHR31100:SF15">
    <property type="entry name" value="AT-HOOK MOTIF NUCLEAR-LOCALIZED PROTEIN 24-RELATED"/>
    <property type="match status" value="1"/>
</dbReference>
<dbReference type="Pfam" id="PF03479">
    <property type="entry name" value="PCC"/>
    <property type="match status" value="1"/>
</dbReference>
<dbReference type="PIRSF" id="PIRSF016021">
    <property type="entry name" value="ESCAROLA"/>
    <property type="match status" value="1"/>
</dbReference>
<dbReference type="SUPFAM" id="SSF117856">
    <property type="entry name" value="AF0104/ALDC/Ptd012-like"/>
    <property type="match status" value="1"/>
</dbReference>
<dbReference type="PROSITE" id="PS51742">
    <property type="entry name" value="PPC"/>
    <property type="match status" value="1"/>
</dbReference>
<name>AHL26_ARATH</name>
<comment type="function">
    <text evidence="1">Transcription factor that specifically binds AT-rich DNA sequences related to the nuclear matrix attachment regions (MARs).</text>
</comment>
<comment type="subcellular location">
    <subcellularLocation>
        <location evidence="1">Nucleus</location>
    </subcellularLocation>
</comment>
<comment type="domain">
    <text evidence="4">The PPC domain mediates interactions between AHL proteins.</text>
</comment>
<reference key="1">
    <citation type="journal article" date="1999" name="Nature">
        <title>Sequence and analysis of chromosome 4 of the plant Arabidopsis thaliana.</title>
        <authorList>
            <person name="Mayer K.F.X."/>
            <person name="Schueller C."/>
            <person name="Wambutt R."/>
            <person name="Murphy G."/>
            <person name="Volckaert G."/>
            <person name="Pohl T."/>
            <person name="Duesterhoeft A."/>
            <person name="Stiekema W."/>
            <person name="Entian K.-D."/>
            <person name="Terryn N."/>
            <person name="Harris B."/>
            <person name="Ansorge W."/>
            <person name="Brandt P."/>
            <person name="Grivell L.A."/>
            <person name="Rieger M."/>
            <person name="Weichselgartner M."/>
            <person name="de Simone V."/>
            <person name="Obermaier B."/>
            <person name="Mache R."/>
            <person name="Mueller M."/>
            <person name="Kreis M."/>
            <person name="Delseny M."/>
            <person name="Puigdomenech P."/>
            <person name="Watson M."/>
            <person name="Schmidtheini T."/>
            <person name="Reichert B."/>
            <person name="Portetelle D."/>
            <person name="Perez-Alonso M."/>
            <person name="Boutry M."/>
            <person name="Bancroft I."/>
            <person name="Vos P."/>
            <person name="Hoheisel J."/>
            <person name="Zimmermann W."/>
            <person name="Wedler H."/>
            <person name="Ridley P."/>
            <person name="Langham S.-A."/>
            <person name="McCullagh B."/>
            <person name="Bilham L."/>
            <person name="Robben J."/>
            <person name="van der Schueren J."/>
            <person name="Grymonprez B."/>
            <person name="Chuang Y.-J."/>
            <person name="Vandenbussche F."/>
            <person name="Braeken M."/>
            <person name="Weltjens I."/>
            <person name="Voet M."/>
            <person name="Bastiaens I."/>
            <person name="Aert R."/>
            <person name="Defoor E."/>
            <person name="Weitzenegger T."/>
            <person name="Bothe G."/>
            <person name="Ramsperger U."/>
            <person name="Hilbert H."/>
            <person name="Braun M."/>
            <person name="Holzer E."/>
            <person name="Brandt A."/>
            <person name="Peters S."/>
            <person name="van Staveren M."/>
            <person name="Dirkse W."/>
            <person name="Mooijman P."/>
            <person name="Klein Lankhorst R."/>
            <person name="Rose M."/>
            <person name="Hauf J."/>
            <person name="Koetter P."/>
            <person name="Berneiser S."/>
            <person name="Hempel S."/>
            <person name="Feldpausch M."/>
            <person name="Lamberth S."/>
            <person name="Van den Daele H."/>
            <person name="De Keyser A."/>
            <person name="Buysshaert C."/>
            <person name="Gielen J."/>
            <person name="Villarroel R."/>
            <person name="De Clercq R."/>
            <person name="van Montagu M."/>
            <person name="Rogers J."/>
            <person name="Cronin A."/>
            <person name="Quail M.A."/>
            <person name="Bray-Allen S."/>
            <person name="Clark L."/>
            <person name="Doggett J."/>
            <person name="Hall S."/>
            <person name="Kay M."/>
            <person name="Lennard N."/>
            <person name="McLay K."/>
            <person name="Mayes R."/>
            <person name="Pettett A."/>
            <person name="Rajandream M.A."/>
            <person name="Lyne M."/>
            <person name="Benes V."/>
            <person name="Rechmann S."/>
            <person name="Borkova D."/>
            <person name="Bloecker H."/>
            <person name="Scharfe M."/>
            <person name="Grimm M."/>
            <person name="Loehnert T.-H."/>
            <person name="Dose S."/>
            <person name="de Haan M."/>
            <person name="Maarse A.C."/>
            <person name="Schaefer M."/>
            <person name="Mueller-Auer S."/>
            <person name="Gabel C."/>
            <person name="Fuchs M."/>
            <person name="Fartmann B."/>
            <person name="Granderath K."/>
            <person name="Dauner D."/>
            <person name="Herzl A."/>
            <person name="Neumann S."/>
            <person name="Argiriou A."/>
            <person name="Vitale D."/>
            <person name="Liguori R."/>
            <person name="Piravandi E."/>
            <person name="Massenet O."/>
            <person name="Quigley F."/>
            <person name="Clabauld G."/>
            <person name="Muendlein A."/>
            <person name="Felber R."/>
            <person name="Schnabl S."/>
            <person name="Hiller R."/>
            <person name="Schmidt W."/>
            <person name="Lecharny A."/>
            <person name="Aubourg S."/>
            <person name="Chefdor F."/>
            <person name="Cooke R."/>
            <person name="Berger C."/>
            <person name="Monfort A."/>
            <person name="Casacuberta E."/>
            <person name="Gibbons T."/>
            <person name="Weber N."/>
            <person name="Vandenbol M."/>
            <person name="Bargues M."/>
            <person name="Terol J."/>
            <person name="Torres A."/>
            <person name="Perez-Perez A."/>
            <person name="Purnelle B."/>
            <person name="Bent E."/>
            <person name="Johnson S."/>
            <person name="Tacon D."/>
            <person name="Jesse T."/>
            <person name="Heijnen L."/>
            <person name="Schwarz S."/>
            <person name="Scholler P."/>
            <person name="Heber S."/>
            <person name="Francs P."/>
            <person name="Bielke C."/>
            <person name="Frishman D."/>
            <person name="Haase D."/>
            <person name="Lemcke K."/>
            <person name="Mewes H.-W."/>
            <person name="Stocker S."/>
            <person name="Zaccaria P."/>
            <person name="Bevan M."/>
            <person name="Wilson R.K."/>
            <person name="de la Bastide M."/>
            <person name="Habermann K."/>
            <person name="Parnell L."/>
            <person name="Dedhia N."/>
            <person name="Gnoj L."/>
            <person name="Schutz K."/>
            <person name="Huang E."/>
            <person name="Spiegel L."/>
            <person name="Sekhon M."/>
            <person name="Murray J."/>
            <person name="Sheet P."/>
            <person name="Cordes M."/>
            <person name="Abu-Threideh J."/>
            <person name="Stoneking T."/>
            <person name="Kalicki J."/>
            <person name="Graves T."/>
            <person name="Harmon G."/>
            <person name="Edwards J."/>
            <person name="Latreille P."/>
            <person name="Courtney L."/>
            <person name="Cloud J."/>
            <person name="Abbott A."/>
            <person name="Scott K."/>
            <person name="Johnson D."/>
            <person name="Minx P."/>
            <person name="Bentley D."/>
            <person name="Fulton B."/>
            <person name="Miller N."/>
            <person name="Greco T."/>
            <person name="Kemp K."/>
            <person name="Kramer J."/>
            <person name="Fulton L."/>
            <person name="Mardis E."/>
            <person name="Dante M."/>
            <person name="Pepin K."/>
            <person name="Hillier L.W."/>
            <person name="Nelson J."/>
            <person name="Spieth J."/>
            <person name="Ryan E."/>
            <person name="Andrews S."/>
            <person name="Geisel C."/>
            <person name="Layman D."/>
            <person name="Du H."/>
            <person name="Ali J."/>
            <person name="Berghoff A."/>
            <person name="Jones K."/>
            <person name="Drone K."/>
            <person name="Cotton M."/>
            <person name="Joshu C."/>
            <person name="Antonoiu B."/>
            <person name="Zidanic M."/>
            <person name="Strong C."/>
            <person name="Sun H."/>
            <person name="Lamar B."/>
            <person name="Yordan C."/>
            <person name="Ma P."/>
            <person name="Zhong J."/>
            <person name="Preston R."/>
            <person name="Vil D."/>
            <person name="Shekher M."/>
            <person name="Matero A."/>
            <person name="Shah R."/>
            <person name="Swaby I.K."/>
            <person name="O'Shaughnessy A."/>
            <person name="Rodriguez M."/>
            <person name="Hoffman J."/>
            <person name="Till S."/>
            <person name="Granat S."/>
            <person name="Shohdy N."/>
            <person name="Hasegawa A."/>
            <person name="Hameed A."/>
            <person name="Lodhi M."/>
            <person name="Johnson A."/>
            <person name="Chen E."/>
            <person name="Marra M.A."/>
            <person name="Martienssen R."/>
            <person name="McCombie W.R."/>
        </authorList>
    </citation>
    <scope>NUCLEOTIDE SEQUENCE [LARGE SCALE GENOMIC DNA]</scope>
    <source>
        <strain>cv. Columbia</strain>
    </source>
</reference>
<reference key="2">
    <citation type="journal article" date="2017" name="Plant J.">
        <title>Araport11: a complete reannotation of the Arabidopsis thaliana reference genome.</title>
        <authorList>
            <person name="Cheng C.Y."/>
            <person name="Krishnakumar V."/>
            <person name="Chan A.P."/>
            <person name="Thibaud-Nissen F."/>
            <person name="Schobel S."/>
            <person name="Town C.D."/>
        </authorList>
    </citation>
    <scope>GENOME REANNOTATION</scope>
    <source>
        <strain>cv. Columbia</strain>
    </source>
</reference>
<reference key="3">
    <citation type="journal article" date="2003" name="Science">
        <title>Empirical analysis of transcriptional activity in the Arabidopsis genome.</title>
        <authorList>
            <person name="Yamada K."/>
            <person name="Lim J."/>
            <person name="Dale J.M."/>
            <person name="Chen H."/>
            <person name="Shinn P."/>
            <person name="Palm C.J."/>
            <person name="Southwick A.M."/>
            <person name="Wu H.C."/>
            <person name="Kim C.J."/>
            <person name="Nguyen M."/>
            <person name="Pham P.K."/>
            <person name="Cheuk R.F."/>
            <person name="Karlin-Newmann G."/>
            <person name="Liu S.X."/>
            <person name="Lam B."/>
            <person name="Sakano H."/>
            <person name="Wu T."/>
            <person name="Yu G."/>
            <person name="Miranda M."/>
            <person name="Quach H.L."/>
            <person name="Tripp M."/>
            <person name="Chang C.H."/>
            <person name="Lee J.M."/>
            <person name="Toriumi M.J."/>
            <person name="Chan M.M."/>
            <person name="Tang C.C."/>
            <person name="Onodera C.S."/>
            <person name="Deng J.M."/>
            <person name="Akiyama K."/>
            <person name="Ansari Y."/>
            <person name="Arakawa T."/>
            <person name="Banh J."/>
            <person name="Banno F."/>
            <person name="Bowser L."/>
            <person name="Brooks S.Y."/>
            <person name="Carninci P."/>
            <person name="Chao Q."/>
            <person name="Choy N."/>
            <person name="Enju A."/>
            <person name="Goldsmith A.D."/>
            <person name="Gurjal M."/>
            <person name="Hansen N.F."/>
            <person name="Hayashizaki Y."/>
            <person name="Johnson-Hopson C."/>
            <person name="Hsuan V.W."/>
            <person name="Iida K."/>
            <person name="Karnes M."/>
            <person name="Khan S."/>
            <person name="Koesema E."/>
            <person name="Ishida J."/>
            <person name="Jiang P.X."/>
            <person name="Jones T."/>
            <person name="Kawai J."/>
            <person name="Kamiya A."/>
            <person name="Meyers C."/>
            <person name="Nakajima M."/>
            <person name="Narusaka M."/>
            <person name="Seki M."/>
            <person name="Sakurai T."/>
            <person name="Satou M."/>
            <person name="Tamse R."/>
            <person name="Vaysberg M."/>
            <person name="Wallender E.K."/>
            <person name="Wong C."/>
            <person name="Yamamura Y."/>
            <person name="Yuan S."/>
            <person name="Shinozaki K."/>
            <person name="Davis R.W."/>
            <person name="Theologis A."/>
            <person name="Ecker J.R."/>
        </authorList>
    </citation>
    <scope>NUCLEOTIDE SEQUENCE [LARGE SCALE MRNA]</scope>
    <source>
        <strain>cv. Columbia</strain>
    </source>
</reference>
<reference key="4">
    <citation type="submission" date="2006-07" db="EMBL/GenBank/DDBJ databases">
        <title>Large-scale analysis of RIKEN Arabidopsis full-length (RAFL) cDNAs.</title>
        <authorList>
            <person name="Totoki Y."/>
            <person name="Seki M."/>
            <person name="Ishida J."/>
            <person name="Nakajima M."/>
            <person name="Enju A."/>
            <person name="Kamiya A."/>
            <person name="Narusaka M."/>
            <person name="Shin-i T."/>
            <person name="Nakagawa M."/>
            <person name="Sakamoto N."/>
            <person name="Oishi K."/>
            <person name="Kohara Y."/>
            <person name="Kobayashi M."/>
            <person name="Toyoda A."/>
            <person name="Sakaki Y."/>
            <person name="Sakurai T."/>
            <person name="Iida K."/>
            <person name="Akiyama K."/>
            <person name="Satou M."/>
            <person name="Toyoda T."/>
            <person name="Konagaya A."/>
            <person name="Carninci P."/>
            <person name="Kawai J."/>
            <person name="Hayashizaki Y."/>
            <person name="Shinozaki K."/>
        </authorList>
    </citation>
    <scope>NUCLEOTIDE SEQUENCE [LARGE SCALE MRNA]</scope>
    <source>
        <strain>cv. Columbia</strain>
    </source>
</reference>
<reference key="5">
    <citation type="submission" date="2009-03" db="EMBL/GenBank/DDBJ databases">
        <title>ORF cloning and analysis of Arabidopsis transcription factor genes.</title>
        <authorList>
            <person name="Fujita M."/>
            <person name="Mizukado S."/>
            <person name="Seki M."/>
            <person name="Shinozaki K."/>
            <person name="Mitsuda N."/>
            <person name="Takiguchi Y."/>
            <person name="Takagi M."/>
        </authorList>
    </citation>
    <scope>NUCLEOTIDE SEQUENCE [LARGE SCALE MRNA]</scope>
</reference>
<reference key="6">
    <citation type="journal article" date="2004" name="Plant Mol. Biol.">
        <title>Identification of a novel plant MAR DNA binding protein localized on chromosomal surfaces.</title>
        <authorList>
            <person name="Fujimoto S."/>
            <person name="Matsunaga S."/>
            <person name="Yonemura M."/>
            <person name="Uchiyama S."/>
            <person name="Azuma T."/>
            <person name="Fukui K."/>
        </authorList>
    </citation>
    <scope>IDENTIFICATION</scope>
    <scope>GENE FAMILY</scope>
    <scope>NOMENCLATURE</scope>
    <source>
        <strain>cv. Columbia</strain>
    </source>
</reference>
<reference key="7">
    <citation type="journal article" date="2013" name="Proc. Natl. Acad. Sci. U.S.A.">
        <title>Arabidopsis thaliana AHL family modulates hypocotyl growth redundantly by interacting with each other via the PPC/DUF296 domain.</title>
        <authorList>
            <person name="Zhao J."/>
            <person name="Favero D.S."/>
            <person name="Peng H."/>
            <person name="Neff M.M."/>
        </authorList>
    </citation>
    <scope>GENE FAMILY</scope>
    <scope>DOMAIN PPC</scope>
</reference>
<keyword id="KW-0238">DNA-binding</keyword>
<keyword id="KW-0539">Nucleus</keyword>
<keyword id="KW-1185">Reference proteome</keyword>
<keyword id="KW-0804">Transcription</keyword>
<keyword id="KW-0805">Transcription regulation</keyword>
<sequence>MDPVQSHGSQSSLPPPFHARDFQLHLQQQQQHQQQHQQQQQQQFFLHHHQQPQRNLDQDHEQQGGSILNRSIKMDREETSDNMDNIANTNSGSEGKEMSLHGGEGGSGGGGSGEQMTRRPRGRPAGSKNKPKAPIIITRDSANALRTHVMEIGDGCDIVDCMATFARRRQRGVCVMSGTGSVTNVTIRQPGSPPGSVVSLHGRFEILSLSGSFLPPPAPPAATGLSVYLAGGQGQVVGGSVVGPLLCSGPVVVMAASFSNAAYERLPLEEDEMQTPVQGGGGGGGGGGGMGSPPMMGQQQAMAAMAAAQGLPPNLLGSVQLPPPQQNDQQYWSTGRPPY</sequence>